<protein>
    <recommendedName>
        <fullName evidence="3">Protein LIKE COV 2</fullName>
    </recommendedName>
</protein>
<feature type="chain" id="PRO_0000431900" description="Protein LIKE COV 2">
    <location>
        <begin position="1"/>
        <end position="261"/>
    </location>
</feature>
<feature type="topological domain" description="Cytoplasmic" evidence="4">
    <location>
        <begin position="1"/>
        <end position="56"/>
    </location>
</feature>
<feature type="transmembrane region" description="Helical; Name=1" evidence="1">
    <location>
        <begin position="57"/>
        <end position="77"/>
    </location>
</feature>
<feature type="topological domain" description="Extracellular" evidence="4">
    <location>
        <begin position="78"/>
        <end position="91"/>
    </location>
</feature>
<feature type="transmembrane region" description="Helical; Name=2" evidence="1">
    <location>
        <begin position="92"/>
        <end position="112"/>
    </location>
</feature>
<feature type="topological domain" description="Cytoplasmic" evidence="4">
    <location>
        <begin position="113"/>
        <end position="261"/>
    </location>
</feature>
<feature type="region of interest" description="Disordered" evidence="2">
    <location>
        <begin position="1"/>
        <end position="38"/>
    </location>
</feature>
<feature type="compositionally biased region" description="Polar residues" evidence="2">
    <location>
        <begin position="7"/>
        <end position="17"/>
    </location>
</feature>
<feature type="sequence conflict" description="In Ref. 5; AAM64375." evidence="4" ref="5">
    <original>D</original>
    <variation>E</variation>
    <location>
        <position position="23"/>
    </location>
</feature>
<feature type="sequence conflict" description="In Ref. 5; AAM64375." evidence="4" ref="5">
    <original>T</original>
    <variation>A</variation>
    <location>
        <position position="245"/>
    </location>
</feature>
<dbReference type="EMBL" id="AC026757">
    <property type="protein sequence ID" value="AAG50825.1"/>
    <property type="molecule type" value="Genomic_DNA"/>
</dbReference>
<dbReference type="EMBL" id="CP002684">
    <property type="protein sequence ID" value="AEE31947.1"/>
    <property type="molecule type" value="Genomic_DNA"/>
</dbReference>
<dbReference type="EMBL" id="AK176692">
    <property type="protein sequence ID" value="BAD44455.1"/>
    <property type="molecule type" value="mRNA"/>
</dbReference>
<dbReference type="EMBL" id="AK176760">
    <property type="protein sequence ID" value="BAD44523.1"/>
    <property type="molecule type" value="mRNA"/>
</dbReference>
<dbReference type="EMBL" id="BT033158">
    <property type="protein sequence ID" value="ACF75547.1"/>
    <property type="molecule type" value="mRNA"/>
</dbReference>
<dbReference type="EMBL" id="AY086303">
    <property type="protein sequence ID" value="AAM64375.1"/>
    <property type="molecule type" value="mRNA"/>
</dbReference>
<dbReference type="RefSeq" id="NP_564483.1">
    <property type="nucleotide sequence ID" value="NM_103466.5"/>
</dbReference>
<dbReference type="FunCoup" id="Q9C8C1">
    <property type="interactions" value="119"/>
</dbReference>
<dbReference type="STRING" id="3702.Q9C8C1"/>
<dbReference type="iPTMnet" id="Q9C8C1"/>
<dbReference type="PaxDb" id="3702-AT1G43130.1"/>
<dbReference type="ProteomicsDB" id="237057"/>
<dbReference type="EnsemblPlants" id="AT1G43130.1">
    <property type="protein sequence ID" value="AT1G43130.1"/>
    <property type="gene ID" value="AT1G43130"/>
</dbReference>
<dbReference type="GeneID" id="840912"/>
<dbReference type="Gramene" id="AT1G43130.1">
    <property type="protein sequence ID" value="AT1G43130.1"/>
    <property type="gene ID" value="AT1G43130"/>
</dbReference>
<dbReference type="KEGG" id="ath:AT1G43130"/>
<dbReference type="Araport" id="AT1G43130"/>
<dbReference type="TAIR" id="AT1G43130">
    <property type="gene designation" value="LCV2"/>
</dbReference>
<dbReference type="eggNOG" id="ENOG502QQ9F">
    <property type="taxonomic scope" value="Eukaryota"/>
</dbReference>
<dbReference type="HOGENOM" id="CLU_068050_0_0_1"/>
<dbReference type="InParanoid" id="Q9C8C1"/>
<dbReference type="OMA" id="DWSVDQA"/>
<dbReference type="OrthoDB" id="534431at2759"/>
<dbReference type="PhylomeDB" id="Q9C8C1"/>
<dbReference type="PRO" id="PR:Q9C8C1"/>
<dbReference type="Proteomes" id="UP000006548">
    <property type="component" value="Chromosome 1"/>
</dbReference>
<dbReference type="ExpressionAtlas" id="Q9C8C1">
    <property type="expression patterns" value="baseline and differential"/>
</dbReference>
<dbReference type="GO" id="GO:0005768">
    <property type="term" value="C:endosome"/>
    <property type="evidence" value="ECO:0007005"/>
    <property type="project" value="TAIR"/>
</dbReference>
<dbReference type="GO" id="GO:0005794">
    <property type="term" value="C:Golgi apparatus"/>
    <property type="evidence" value="ECO:0007005"/>
    <property type="project" value="TAIR"/>
</dbReference>
<dbReference type="GO" id="GO:0016020">
    <property type="term" value="C:membrane"/>
    <property type="evidence" value="ECO:0007669"/>
    <property type="project" value="UniProtKB-SubCell"/>
</dbReference>
<dbReference type="GO" id="GO:0005802">
    <property type="term" value="C:trans-Golgi network"/>
    <property type="evidence" value="ECO:0007005"/>
    <property type="project" value="TAIR"/>
</dbReference>
<dbReference type="GO" id="GO:0010222">
    <property type="term" value="P:stem vascular tissue pattern formation"/>
    <property type="evidence" value="ECO:0000250"/>
    <property type="project" value="TAIR"/>
</dbReference>
<dbReference type="InterPro" id="IPR007462">
    <property type="entry name" value="COV1-like"/>
</dbReference>
<dbReference type="PANTHER" id="PTHR31876">
    <property type="entry name" value="COV-LIKE PROTEIN 1"/>
    <property type="match status" value="1"/>
</dbReference>
<dbReference type="PANTHER" id="PTHR31876:SF26">
    <property type="entry name" value="PROTEIN LIKE COV 2"/>
    <property type="match status" value="1"/>
</dbReference>
<dbReference type="Pfam" id="PF04367">
    <property type="entry name" value="DUF502"/>
    <property type="match status" value="1"/>
</dbReference>
<organism evidence="7">
    <name type="scientific">Arabidopsis thaliana</name>
    <name type="common">Mouse-ear cress</name>
    <dbReference type="NCBI Taxonomy" id="3702"/>
    <lineage>
        <taxon>Eukaryota</taxon>
        <taxon>Viridiplantae</taxon>
        <taxon>Streptophyta</taxon>
        <taxon>Embryophyta</taxon>
        <taxon>Tracheophyta</taxon>
        <taxon>Spermatophyta</taxon>
        <taxon>Magnoliopsida</taxon>
        <taxon>eudicotyledons</taxon>
        <taxon>Gunneridae</taxon>
        <taxon>Pentapetalae</taxon>
        <taxon>rosids</taxon>
        <taxon>malvids</taxon>
        <taxon>Brassicales</taxon>
        <taxon>Brassicaceae</taxon>
        <taxon>Camelineae</taxon>
        <taxon>Arabidopsis</taxon>
    </lineage>
</organism>
<evidence type="ECO:0000255" key="1"/>
<evidence type="ECO:0000256" key="2">
    <source>
        <dbReference type="SAM" id="MobiDB-lite"/>
    </source>
</evidence>
<evidence type="ECO:0000303" key="3">
    <source>
    </source>
</evidence>
<evidence type="ECO:0000305" key="4"/>
<evidence type="ECO:0000312" key="5">
    <source>
        <dbReference type="Araport" id="AT1G43130"/>
    </source>
</evidence>
<evidence type="ECO:0000312" key="6">
    <source>
        <dbReference type="EMBL" id="AAG50825.1"/>
    </source>
</evidence>
<evidence type="ECO:0000312" key="7">
    <source>
        <dbReference type="Proteomes" id="UP000006548"/>
    </source>
</evidence>
<comment type="subcellular location">
    <subcellularLocation>
        <location evidence="1">Membrane</location>
        <topology evidence="1">Multi-pass membrane protein</topology>
    </subcellularLocation>
</comment>
<comment type="similarity">
    <text evidence="4">Belongs to the plant COV1 protein family.</text>
</comment>
<reference key="1">
    <citation type="journal article" date="2000" name="Nature">
        <title>Sequence and analysis of chromosome 1 of the plant Arabidopsis thaliana.</title>
        <authorList>
            <person name="Theologis A."/>
            <person name="Ecker J.R."/>
            <person name="Palm C.J."/>
            <person name="Federspiel N.A."/>
            <person name="Kaul S."/>
            <person name="White O."/>
            <person name="Alonso J."/>
            <person name="Altafi H."/>
            <person name="Araujo R."/>
            <person name="Bowman C.L."/>
            <person name="Brooks S.Y."/>
            <person name="Buehler E."/>
            <person name="Chan A."/>
            <person name="Chao Q."/>
            <person name="Chen H."/>
            <person name="Cheuk R.F."/>
            <person name="Chin C.W."/>
            <person name="Chung M.K."/>
            <person name="Conn L."/>
            <person name="Conway A.B."/>
            <person name="Conway A.R."/>
            <person name="Creasy T.H."/>
            <person name="Dewar K."/>
            <person name="Dunn P."/>
            <person name="Etgu P."/>
            <person name="Feldblyum T.V."/>
            <person name="Feng J.-D."/>
            <person name="Fong B."/>
            <person name="Fujii C.Y."/>
            <person name="Gill J.E."/>
            <person name="Goldsmith A.D."/>
            <person name="Haas B."/>
            <person name="Hansen N.F."/>
            <person name="Hughes B."/>
            <person name="Huizar L."/>
            <person name="Hunter J.L."/>
            <person name="Jenkins J."/>
            <person name="Johnson-Hopson C."/>
            <person name="Khan S."/>
            <person name="Khaykin E."/>
            <person name="Kim C.J."/>
            <person name="Koo H.L."/>
            <person name="Kremenetskaia I."/>
            <person name="Kurtz D.B."/>
            <person name="Kwan A."/>
            <person name="Lam B."/>
            <person name="Langin-Hooper S."/>
            <person name="Lee A."/>
            <person name="Lee J.M."/>
            <person name="Lenz C.A."/>
            <person name="Li J.H."/>
            <person name="Li Y.-P."/>
            <person name="Lin X."/>
            <person name="Liu S.X."/>
            <person name="Liu Z.A."/>
            <person name="Luros J.S."/>
            <person name="Maiti R."/>
            <person name="Marziali A."/>
            <person name="Militscher J."/>
            <person name="Miranda M."/>
            <person name="Nguyen M."/>
            <person name="Nierman W.C."/>
            <person name="Osborne B.I."/>
            <person name="Pai G."/>
            <person name="Peterson J."/>
            <person name="Pham P.K."/>
            <person name="Rizzo M."/>
            <person name="Rooney T."/>
            <person name="Rowley D."/>
            <person name="Sakano H."/>
            <person name="Salzberg S.L."/>
            <person name="Schwartz J.R."/>
            <person name="Shinn P."/>
            <person name="Southwick A.M."/>
            <person name="Sun H."/>
            <person name="Tallon L.J."/>
            <person name="Tambunga G."/>
            <person name="Toriumi M.J."/>
            <person name="Town C.D."/>
            <person name="Utterback T."/>
            <person name="Van Aken S."/>
            <person name="Vaysberg M."/>
            <person name="Vysotskaia V.S."/>
            <person name="Walker M."/>
            <person name="Wu D."/>
            <person name="Yu G."/>
            <person name="Fraser C.M."/>
            <person name="Venter J.C."/>
            <person name="Davis R.W."/>
        </authorList>
    </citation>
    <scope>NUCLEOTIDE SEQUENCE [LARGE SCALE GENOMIC DNA]</scope>
    <source>
        <strain>cv. Columbia</strain>
    </source>
</reference>
<reference key="2">
    <citation type="journal article" date="2017" name="Plant J.">
        <title>Araport11: a complete reannotation of the Arabidopsis thaliana reference genome.</title>
        <authorList>
            <person name="Cheng C.Y."/>
            <person name="Krishnakumar V."/>
            <person name="Chan A.P."/>
            <person name="Thibaud-Nissen F."/>
            <person name="Schobel S."/>
            <person name="Town C.D."/>
        </authorList>
    </citation>
    <scope>GENOME REANNOTATION</scope>
    <source>
        <strain>cv. Columbia</strain>
    </source>
</reference>
<reference key="3">
    <citation type="submission" date="2004-09" db="EMBL/GenBank/DDBJ databases">
        <title>Large-scale analysis of RIKEN Arabidopsis full-length (RAFL) cDNAs.</title>
        <authorList>
            <person name="Totoki Y."/>
            <person name="Seki M."/>
            <person name="Ishida J."/>
            <person name="Nakajima M."/>
            <person name="Enju A."/>
            <person name="Kamiya A."/>
            <person name="Narusaka M."/>
            <person name="Shin-i T."/>
            <person name="Nakagawa M."/>
            <person name="Sakamoto N."/>
            <person name="Oishi K."/>
            <person name="Kohara Y."/>
            <person name="Kobayashi M."/>
            <person name="Toyoda A."/>
            <person name="Sakaki Y."/>
            <person name="Sakurai T."/>
            <person name="Iida K."/>
            <person name="Akiyama K."/>
            <person name="Satou M."/>
            <person name="Toyoda T."/>
            <person name="Konagaya A."/>
            <person name="Carninci P."/>
            <person name="Kawai J."/>
            <person name="Hayashizaki Y."/>
            <person name="Shinozaki K."/>
        </authorList>
    </citation>
    <scope>NUCLEOTIDE SEQUENCE [LARGE SCALE MRNA]</scope>
    <source>
        <strain>cv. Columbia</strain>
    </source>
</reference>
<reference key="4">
    <citation type="submission" date="2008-07" db="EMBL/GenBank/DDBJ databases">
        <title>Arabidopsis ORF clones.</title>
        <authorList>
            <person name="de los Reyes C."/>
            <person name="Quan R."/>
            <person name="Chen H."/>
            <person name="Bautista V."/>
            <person name="Kim C.J."/>
            <person name="Ecker J.R."/>
        </authorList>
    </citation>
    <scope>NUCLEOTIDE SEQUENCE [LARGE SCALE MRNA]</scope>
    <source>
        <strain>cv. Columbia</strain>
    </source>
</reference>
<reference key="5">
    <citation type="submission" date="2002-03" db="EMBL/GenBank/DDBJ databases">
        <title>Full-length cDNA from Arabidopsis thaliana.</title>
        <authorList>
            <person name="Brover V.V."/>
            <person name="Troukhan M.E."/>
            <person name="Alexandrov N.A."/>
            <person name="Lu Y.-P."/>
            <person name="Flavell R.B."/>
            <person name="Feldmann K.A."/>
        </authorList>
    </citation>
    <scope>NUCLEOTIDE SEQUENCE [LARGE SCALE MRNA]</scope>
</reference>
<reference key="6">
    <citation type="journal article" date="2003" name="Development">
        <title>Isolation of COV1, a gene involved in the regulation of vascular patterning in the stem of Arabidopsis.</title>
        <authorList>
            <person name="Parker G."/>
            <person name="Schofield R."/>
            <person name="Sundberg B."/>
            <person name="Turner S."/>
        </authorList>
    </citation>
    <scope>GENE FAMILY</scope>
    <scope>NOMENCLATURE</scope>
    <source>
        <strain>cv. Landsberg erecta</strain>
    </source>
</reference>
<proteinExistence type="evidence at transcript level"/>
<sequence length="261" mass="29216">MAEGKEATTSSLSQGLTPHQDPDDAPKSPPNSPNSSTRKACYGVLQSWVSKKFMTGFVVLFPVAVTFLITWWFIQFVDGFFSPIYENLGVDIFGLGFITSVLFTFFVGIFASSWLGSTVFWLGEQFIRRMPFVKHIYSASKQISTAISPDQNTTAFKEVAIIRHPRIGEYAFGFITSSVTLQTDHGEEELCSVYVPTNHLYIGDVFLVSSEEIIRPNLSIREGIEIIVSVGMTMPQVISHVDRTTNRTPHQHSLRVPLNRL</sequence>
<name>LCV2_ARATH</name>
<accession>Q9C8C1</accession>
<accession>Q8LCZ6</accession>
<gene>
    <name evidence="3" type="primary">LCV2</name>
    <name evidence="5" type="ordered locus">At1g43130</name>
    <name evidence="6" type="ORF">F2H10.2</name>
</gene>
<keyword id="KW-0472">Membrane</keyword>
<keyword id="KW-1185">Reference proteome</keyword>
<keyword id="KW-0812">Transmembrane</keyword>
<keyword id="KW-1133">Transmembrane helix</keyword>